<proteinExistence type="predicted"/>
<dbReference type="EMBL" id="AF440571">
    <property type="protein sequence ID" value="AAL27713.1"/>
    <property type="molecule type" value="Genomic_DNA"/>
</dbReference>
<dbReference type="RefSeq" id="NP_445667.1">
    <property type="nucleotide sequence ID" value="NC_003214.2"/>
</dbReference>
<dbReference type="SMR" id="Q914M8"/>
<dbReference type="GeneID" id="922285"/>
<dbReference type="KEGG" id="vg:922285"/>
<dbReference type="Proteomes" id="UP000007017">
    <property type="component" value="Segment"/>
</dbReference>
<name>Y002_SIFVH</name>
<gene>
    <name type="primary">SIFV0002</name>
</gene>
<accession>Q914M8</accession>
<keyword id="KW-1185">Reference proteome</keyword>
<sequence>MKLIDLAKNIARELKEADEKYIIINGKKERILAIEIVQITSMPRFQIVTEKGTVLILTPSQFLRKKYELIKNGEKKSFFGV</sequence>
<organism>
    <name type="scientific">Sulfolobus islandicus filamentous virus (isolate Iceland/Hveragerdi)</name>
    <name type="common">SIFV</name>
    <dbReference type="NCBI Taxonomy" id="654908"/>
    <lineage>
        <taxon>Viruses</taxon>
        <taxon>Adnaviria</taxon>
        <taxon>Zilligvirae</taxon>
        <taxon>Taleaviricota</taxon>
        <taxon>Tokiviricetes</taxon>
        <taxon>Ligamenvirales</taxon>
        <taxon>Lipothrixviridae</taxon>
        <taxon>Betalipothrixvirus</taxon>
        <taxon>Sulfolobus islandicus filamentous virus</taxon>
    </lineage>
</organism>
<protein>
    <recommendedName>
        <fullName>Uncharacterized protein 2</fullName>
    </recommendedName>
</protein>
<reference key="1">
    <citation type="journal article" date="2000" name="Virology">
        <title>A novel lipothrixvirus, SIFV, of the extremely thermophilic crenarchaeon Sulfolobus.</title>
        <authorList>
            <person name="Arnold H.P."/>
            <person name="Zillig W."/>
            <person name="Ziese U."/>
            <person name="Holz I."/>
            <person name="Crosby M."/>
            <person name="Utterback T."/>
            <person name="Weidmann J.F."/>
            <person name="Umayam L.A."/>
            <person name="Teffera K."/>
            <person name="Kristjanson J.K."/>
            <person name="Klenk H.P."/>
            <person name="Nelson K.E."/>
            <person name="Fraser C.M."/>
        </authorList>
    </citation>
    <scope>NUCLEOTIDE SEQUENCE [GENOMIC DNA]</scope>
</reference>
<feature type="chain" id="PRO_0000385422" description="Uncharacterized protein 2">
    <location>
        <begin position="1"/>
        <end position="81"/>
    </location>
</feature>
<organismHost>
    <name type="scientific">Saccharolobus islandicus</name>
    <name type="common">Sulfolobus islandicus</name>
    <dbReference type="NCBI Taxonomy" id="43080"/>
</organismHost>